<accession>Q6UDH2</accession>
<protein>
    <recommendedName>
        <fullName evidence="1">DNA helicase/primase complex-associated protein</fullName>
        <shortName evidence="1">HEPA</shortName>
    </recommendedName>
    <alternativeName>
        <fullName evidence="1">Primase-associated factor</fullName>
    </alternativeName>
</protein>
<evidence type="ECO:0000255" key="1">
    <source>
        <dbReference type="HAMAP-Rule" id="MF_04010"/>
    </source>
</evidence>
<evidence type="ECO:0000256" key="2">
    <source>
        <dbReference type="SAM" id="MobiDB-lite"/>
    </source>
</evidence>
<dbReference type="EMBL" id="AY372243">
    <property type="protein sequence ID" value="AAQ73738.1"/>
    <property type="molecule type" value="Genomic_DNA"/>
</dbReference>
<dbReference type="RefSeq" id="NP_944432.1">
    <property type="nucleotide sequence ID" value="NC_005264.1"/>
</dbReference>
<dbReference type="GeneID" id="2656975"/>
<dbReference type="KEGG" id="vg:2656975"/>
<dbReference type="Proteomes" id="UP000006840">
    <property type="component" value="Segment"/>
</dbReference>
<dbReference type="GO" id="GO:0042025">
    <property type="term" value="C:host cell nucleus"/>
    <property type="evidence" value="ECO:0007669"/>
    <property type="project" value="UniProtKB-SubCell"/>
</dbReference>
<dbReference type="GO" id="GO:0006260">
    <property type="term" value="P:DNA replication"/>
    <property type="evidence" value="ECO:0007669"/>
    <property type="project" value="UniProtKB-KW"/>
</dbReference>
<dbReference type="GO" id="GO:0019079">
    <property type="term" value="P:viral genome replication"/>
    <property type="evidence" value="ECO:0007669"/>
    <property type="project" value="InterPro"/>
</dbReference>
<dbReference type="HAMAP" id="MF_04010">
    <property type="entry name" value="HSV_HEPA"/>
    <property type="match status" value="1"/>
</dbReference>
<dbReference type="InterPro" id="IPR004996">
    <property type="entry name" value="HSV_HEPA"/>
</dbReference>
<gene>
    <name type="primary">UL8</name>
</gene>
<reference key="1">
    <citation type="journal article" date="2006" name="J. Virol.">
        <title>Psittacid herpesvirus 1 and infectious laryngotracheitis virus: Comparative genome sequence analysis of two avian alphaherpesviruses.</title>
        <authorList>
            <person name="Thureen D.R."/>
            <person name="Keeler C.L. Jr."/>
        </authorList>
    </citation>
    <scope>NUCLEOTIDE SEQUENCE [LARGE SCALE GENOMIC DNA]</scope>
</reference>
<feature type="chain" id="PRO_0000406835" description="DNA helicase/primase complex-associated protein">
    <location>
        <begin position="1"/>
        <end position="648"/>
    </location>
</feature>
<feature type="region of interest" description="Disordered" evidence="2">
    <location>
        <begin position="43"/>
        <end position="63"/>
    </location>
</feature>
<sequence>MRMRSLSAASSGYNGDPRGLGLERLKTVVRGKLRPSGSEIEWLWPSDQNNTASPAGAKTDQPTSAPRFFLTREATVFGPSWKPASRQIVASVLPVTGEMVMVSAERFSCMALFAVFLKLYRGFYMKPVAPCATHVRRPIMLAQFPVFDSRPSHGPQEQSGSHEPLARAAAQRRTKHNFLFMPGFPCLACVPISASAERHDRAMAACRAASLTEHLWPAYGIRALHMLNRTPAAASITRAVARRSRLLTADLTRSLETFPAGTITCAAGAPMIFSDCRLARLDFSAFYPCLYAAYVGKHRGLTKILHERLRRRAGSEDLKPALVTMFGGLRHVDANGYRFVVGASNIIAKAVEQTANRMGFGVAAYVKDGFWGAFDSSSKTTAEELRAECEKAANATLARLVVDKDGAGEPPVSLVLRLEGVYTDGLLINANKYWLFNSESGDSFICGVMGGHERSGLSRETTAAADDILKKIKASAKSIDDVEAIARSRIDAWIYAIFGHRGDVEFWAEQTPGDKDFLIPEEIRTTTVGKLEAADSCLGGELSYVFIPKNTQDTGAAKTKGGGARGWHSAPAAAFPCSLVEDVFCIKINYEAHLLPRLEGLLAWSRIYAWLQFRNQIPLADDEDESTTQAKETARIDYNYGDVSFLFA</sequence>
<organismHost>
    <name type="scientific">Amazona oratrix</name>
    <name type="common">yellow-headed parrot</name>
    <dbReference type="NCBI Taxonomy" id="152276"/>
</organismHost>
<comment type="function">
    <text evidence="1">Component of the helicase/primase complex. Unwinds the DNA at the replication forks and generates single-stranded DNA for both leading and lagging strand synthesis. The primase synthesizes short RNA primers on the lagging strand that the polymerase presumably elongates using dNTPs. The primase-associated factor has no known catalytic activity in the complex and may serve to facilitate the formation of the replisome by directly interacting with the origin-binding protein and the polymerase.</text>
</comment>
<comment type="subunit">
    <text evidence="1">Associates with the primase and the helicase to form the helicase-primase complex. Interacts with the origin-binding protein. Interacts with the polymerase catalytic subunit.</text>
</comment>
<comment type="subcellular location">
    <subcellularLocation>
        <location evidence="1">Host nucleus</location>
    </subcellularLocation>
</comment>
<comment type="similarity">
    <text evidence="1">Belongs to the herpesviridae HEPA family.</text>
</comment>
<keyword id="KW-0235">DNA replication</keyword>
<keyword id="KW-1048">Host nucleus</keyword>
<keyword id="KW-1185">Reference proteome</keyword>
<organism>
    <name type="scientific">Psittacid herpesvirus 1 (isolate Amazon parrot/-/97-0001/1997)</name>
    <name type="common">PsHV-1</name>
    <name type="synonym">Pacheco's disease virus</name>
    <dbReference type="NCBI Taxonomy" id="670426"/>
    <lineage>
        <taxon>Viruses</taxon>
        <taxon>Duplodnaviria</taxon>
        <taxon>Heunggongvirae</taxon>
        <taxon>Peploviricota</taxon>
        <taxon>Herviviricetes</taxon>
        <taxon>Herpesvirales</taxon>
        <taxon>Orthoherpesviridae</taxon>
        <taxon>Alphaherpesvirinae</taxon>
        <taxon>Iltovirus</taxon>
        <taxon>Iltovirus psittacidalpha1</taxon>
        <taxon>Psittacid alphaherpesvirus 1</taxon>
    </lineage>
</organism>
<proteinExistence type="inferred from homology"/>
<name>HEPA_PSHV1</name>